<dbReference type="EC" id="1.2.1.19" evidence="4"/>
<dbReference type="EC" id="1.2.1.28" evidence="1"/>
<dbReference type="EC" id="1.2.1.3" evidence="10"/>
<dbReference type="EC" id="1.2.1.36" evidence="10"/>
<dbReference type="EMBL" id="L36128">
    <property type="protein sequence ID" value="AAA74234.1"/>
    <property type="molecule type" value="mRNA"/>
</dbReference>
<dbReference type="EMBL" id="BT030667">
    <property type="protein sequence ID" value="ABS44983.1"/>
    <property type="molecule type" value="mRNA"/>
</dbReference>
<dbReference type="EMBL" id="BC105193">
    <property type="protein sequence ID" value="AAI05194.1"/>
    <property type="molecule type" value="mRNA"/>
</dbReference>
<dbReference type="RefSeq" id="NP_776664.1">
    <property type="nucleotide sequence ID" value="NM_174239.2"/>
</dbReference>
<dbReference type="SMR" id="P48644"/>
<dbReference type="FunCoup" id="P48644">
    <property type="interactions" value="782"/>
</dbReference>
<dbReference type="STRING" id="9913.ENSBTAP00000010661"/>
<dbReference type="PaxDb" id="9913-ENSBTAP00000010661"/>
<dbReference type="PeptideAtlas" id="P48644"/>
<dbReference type="Ensembl" id="ENSBTAT00000010661.6">
    <property type="protein sequence ID" value="ENSBTAP00000010661.4"/>
    <property type="gene ID" value="ENSBTAG00000008103.6"/>
</dbReference>
<dbReference type="GeneID" id="281615"/>
<dbReference type="KEGG" id="bta:281615"/>
<dbReference type="CTD" id="216"/>
<dbReference type="VEuPathDB" id="HostDB:ENSBTAG00000008103"/>
<dbReference type="VGNC" id="VGNC:25808">
    <property type="gene designation" value="ALDH1A1"/>
</dbReference>
<dbReference type="eggNOG" id="KOG2450">
    <property type="taxonomic scope" value="Eukaryota"/>
</dbReference>
<dbReference type="GeneTree" id="ENSGT00940000154609"/>
<dbReference type="HOGENOM" id="CLU_005391_0_1_1"/>
<dbReference type="InParanoid" id="P48644"/>
<dbReference type="OMA" id="TKAVWIT"/>
<dbReference type="OrthoDB" id="310895at2759"/>
<dbReference type="TreeFam" id="TF300455"/>
<dbReference type="Reactome" id="R-BTA-5365859">
    <property type="pathway name" value="RA biosynthesis pathway"/>
</dbReference>
<dbReference type="Reactome" id="R-BTA-70350">
    <property type="pathway name" value="Fructose catabolism"/>
</dbReference>
<dbReference type="Reactome" id="R-BTA-71384">
    <property type="pathway name" value="Ethanol oxidation"/>
</dbReference>
<dbReference type="UniPathway" id="UPA00912"/>
<dbReference type="Proteomes" id="UP000009136">
    <property type="component" value="Chromosome 8"/>
</dbReference>
<dbReference type="Bgee" id="ENSBTAG00000008103">
    <property type="expression patterns" value="Expressed in liver and 102 other cell types or tissues"/>
</dbReference>
<dbReference type="GO" id="GO:0030424">
    <property type="term" value="C:axon"/>
    <property type="evidence" value="ECO:0000250"/>
    <property type="project" value="UniProtKB"/>
</dbReference>
<dbReference type="GO" id="GO:0005829">
    <property type="term" value="C:cytosol"/>
    <property type="evidence" value="ECO:0000314"/>
    <property type="project" value="UniProtKB"/>
</dbReference>
<dbReference type="GO" id="GO:0045202">
    <property type="term" value="C:synapse"/>
    <property type="evidence" value="ECO:0000250"/>
    <property type="project" value="UniProtKB"/>
</dbReference>
<dbReference type="GO" id="GO:0106373">
    <property type="term" value="F:3-deoxyglucosone dehydrogenase activity"/>
    <property type="evidence" value="ECO:0000250"/>
    <property type="project" value="UniProtKB"/>
</dbReference>
<dbReference type="GO" id="GO:0140087">
    <property type="term" value="F:acetaldehyde dehydrogenase (NAD+) activity"/>
    <property type="evidence" value="ECO:0007669"/>
    <property type="project" value="RHEA"/>
</dbReference>
<dbReference type="GO" id="GO:0004029">
    <property type="term" value="F:aldehyde dehydrogenase (NAD+) activity"/>
    <property type="evidence" value="ECO:0000314"/>
    <property type="project" value="UniProtKB"/>
</dbReference>
<dbReference type="GO" id="GO:0019145">
    <property type="term" value="F:aminobutyraldehyde dehydrogenase (NAD+) activity"/>
    <property type="evidence" value="ECO:0000250"/>
    <property type="project" value="UniProtKB"/>
</dbReference>
<dbReference type="GO" id="GO:0018479">
    <property type="term" value="F:benzaldehyde dehydrogenase (NAD+) activity"/>
    <property type="evidence" value="ECO:0000318"/>
    <property type="project" value="GO_Central"/>
</dbReference>
<dbReference type="GO" id="GO:0051287">
    <property type="term" value="F:NAD binding"/>
    <property type="evidence" value="ECO:0000250"/>
    <property type="project" value="CAFA"/>
</dbReference>
<dbReference type="GO" id="GO:0001758">
    <property type="term" value="F:retinal dehydrogenase activity"/>
    <property type="evidence" value="ECO:0000314"/>
    <property type="project" value="UniProtKB"/>
</dbReference>
<dbReference type="GO" id="GO:0110095">
    <property type="term" value="P:cellular detoxification of aldehyde"/>
    <property type="evidence" value="ECO:0000250"/>
    <property type="project" value="UniProtKB"/>
</dbReference>
<dbReference type="GO" id="GO:0030392">
    <property type="term" value="P:fructosamine catabolic process"/>
    <property type="evidence" value="ECO:0000250"/>
    <property type="project" value="UniProtKB"/>
</dbReference>
<dbReference type="GO" id="GO:0009449">
    <property type="term" value="P:gamma-aminobutyric acid biosynthetic process"/>
    <property type="evidence" value="ECO:0000250"/>
    <property type="project" value="UniProtKB"/>
</dbReference>
<dbReference type="GO" id="GO:0036438">
    <property type="term" value="P:maintenance of lens transparency"/>
    <property type="evidence" value="ECO:0000250"/>
    <property type="project" value="UniProtKB"/>
</dbReference>
<dbReference type="GO" id="GO:0001523">
    <property type="term" value="P:retinoid metabolic process"/>
    <property type="evidence" value="ECO:0000314"/>
    <property type="project" value="UniProtKB"/>
</dbReference>
<dbReference type="GO" id="GO:0042572">
    <property type="term" value="P:retinol metabolic process"/>
    <property type="evidence" value="ECO:0007669"/>
    <property type="project" value="UniProtKB-UniPathway"/>
</dbReference>
<dbReference type="CDD" id="cd07141">
    <property type="entry name" value="ALDH_F1AB_F2_RALDH1"/>
    <property type="match status" value="1"/>
</dbReference>
<dbReference type="FunFam" id="3.40.605.10:FF:000029">
    <property type="entry name" value="Aldehyde dehydrogenase, mitochondrial"/>
    <property type="match status" value="1"/>
</dbReference>
<dbReference type="FunFam" id="3.40.605.10:FF:000026">
    <property type="entry name" value="Aldehyde dehydrogenase, putative"/>
    <property type="match status" value="1"/>
</dbReference>
<dbReference type="FunFam" id="3.40.309.10:FF:000001">
    <property type="entry name" value="Mitochondrial aldehyde dehydrogenase 2"/>
    <property type="match status" value="1"/>
</dbReference>
<dbReference type="Gene3D" id="3.40.605.10">
    <property type="entry name" value="Aldehyde Dehydrogenase, Chain A, domain 1"/>
    <property type="match status" value="1"/>
</dbReference>
<dbReference type="Gene3D" id="3.40.309.10">
    <property type="entry name" value="Aldehyde Dehydrogenase, Chain A, domain 2"/>
    <property type="match status" value="1"/>
</dbReference>
<dbReference type="InterPro" id="IPR016161">
    <property type="entry name" value="Ald_DH/histidinol_DH"/>
</dbReference>
<dbReference type="InterPro" id="IPR016163">
    <property type="entry name" value="Ald_DH_C"/>
</dbReference>
<dbReference type="InterPro" id="IPR016160">
    <property type="entry name" value="Ald_DH_CS_CYS"/>
</dbReference>
<dbReference type="InterPro" id="IPR029510">
    <property type="entry name" value="Ald_DH_CS_GLU"/>
</dbReference>
<dbReference type="InterPro" id="IPR016162">
    <property type="entry name" value="Ald_DH_N"/>
</dbReference>
<dbReference type="InterPro" id="IPR015590">
    <property type="entry name" value="Aldehyde_DH_dom"/>
</dbReference>
<dbReference type="PANTHER" id="PTHR11699">
    <property type="entry name" value="ALDEHYDE DEHYDROGENASE-RELATED"/>
    <property type="match status" value="1"/>
</dbReference>
<dbReference type="Pfam" id="PF00171">
    <property type="entry name" value="Aldedh"/>
    <property type="match status" value="1"/>
</dbReference>
<dbReference type="SUPFAM" id="SSF53720">
    <property type="entry name" value="ALDH-like"/>
    <property type="match status" value="1"/>
</dbReference>
<dbReference type="PROSITE" id="PS00070">
    <property type="entry name" value="ALDEHYDE_DEHYDR_CYS"/>
    <property type="match status" value="1"/>
</dbReference>
<dbReference type="PROSITE" id="PS00687">
    <property type="entry name" value="ALDEHYDE_DEHYDR_GLU"/>
    <property type="match status" value="1"/>
</dbReference>
<keyword id="KW-0007">Acetylation</keyword>
<keyword id="KW-0966">Cell projection</keyword>
<keyword id="KW-0963">Cytoplasm</keyword>
<keyword id="KW-0443">Lipid metabolism</keyword>
<keyword id="KW-0520">NAD</keyword>
<keyword id="KW-0560">Oxidoreductase</keyword>
<keyword id="KW-0597">Phosphoprotein</keyword>
<keyword id="KW-1185">Reference proteome</keyword>
<evidence type="ECO:0000250" key="1">
    <source>
        <dbReference type="UniProtKB" id="P00352"/>
    </source>
</evidence>
<evidence type="ECO:0000250" key="2">
    <source>
        <dbReference type="UniProtKB" id="P15437"/>
    </source>
</evidence>
<evidence type="ECO:0000250" key="3">
    <source>
        <dbReference type="UniProtKB" id="P20000"/>
    </source>
</evidence>
<evidence type="ECO:0000250" key="4">
    <source>
        <dbReference type="UniProtKB" id="P24549"/>
    </source>
</evidence>
<evidence type="ECO:0000250" key="5">
    <source>
        <dbReference type="UniProtKB" id="P51647"/>
    </source>
</evidence>
<evidence type="ECO:0000250" key="6">
    <source>
        <dbReference type="UniProtKB" id="P51977"/>
    </source>
</evidence>
<evidence type="ECO:0000250" key="7">
    <source>
        <dbReference type="UniProtKB" id="Q8HYE4"/>
    </source>
</evidence>
<evidence type="ECO:0000255" key="8">
    <source>
        <dbReference type="PROSITE-ProRule" id="PRU10007"/>
    </source>
</evidence>
<evidence type="ECO:0000255" key="9">
    <source>
        <dbReference type="PROSITE-ProRule" id="PRU10008"/>
    </source>
</evidence>
<evidence type="ECO:0000269" key="10">
    <source>
    </source>
</evidence>
<evidence type="ECO:0000305" key="11"/>
<evidence type="ECO:0000305" key="12">
    <source>
    </source>
</evidence>
<reference key="1">
    <citation type="journal article" date="1995" name="Vis. Neurosci.">
        <title>Characterization and localization of an aldehyde dehydrogenase to amacrine cells of bovine retina.</title>
        <authorList>
            <person name="Saari J.C."/>
            <person name="Champer R.J."/>
            <person name="Asson-Batres M.A."/>
            <person name="Garwin G.G."/>
            <person name="Huang J."/>
            <person name="Crabb J.W."/>
            <person name="Milam A.H."/>
        </authorList>
    </citation>
    <scope>NUCLEOTIDE SEQUENCE [MRNA]</scope>
    <scope>FUNCTION</scope>
    <scope>CATALYTIC ACTIVITY</scope>
    <scope>BIOPHYSICOCHEMICAL PROPERTIES</scope>
    <scope>PATHWAY</scope>
    <scope>SUBCELLULAR LOCATION</scope>
    <scope>TISSUE SPECIFICITY</scope>
    <source>
        <tissue>Retina</tissue>
    </source>
</reference>
<reference key="2">
    <citation type="journal article" date="2005" name="BMC Genomics">
        <title>Characterization of 954 bovine full-CDS cDNA sequences.</title>
        <authorList>
            <person name="Harhay G.P."/>
            <person name="Sonstegard T.S."/>
            <person name="Keele J.W."/>
            <person name="Heaton M.P."/>
            <person name="Clawson M.L."/>
            <person name="Snelling W.M."/>
            <person name="Wiedmann R.T."/>
            <person name="Van Tassell C.P."/>
            <person name="Smith T.P.L."/>
        </authorList>
    </citation>
    <scope>NUCLEOTIDE SEQUENCE [LARGE SCALE MRNA]</scope>
</reference>
<reference key="3">
    <citation type="submission" date="2005-09" db="EMBL/GenBank/DDBJ databases">
        <authorList>
            <consortium name="NIH - Mammalian Gene Collection (MGC) project"/>
        </authorList>
    </citation>
    <scope>NUCLEOTIDE SEQUENCE [LARGE SCALE MRNA]</scope>
    <source>
        <strain>Hereford</strain>
        <tissue>Fetal liver</tissue>
    </source>
</reference>
<sequence length="501" mass="54806">MSSSAMPDVPAPLTNLQFKYTKIFINNEWHSSVSGKKFPVFNPATEEKLCEVEEGDKEDVDKAVKAARQAFQIGSPWRTMDASERGRLLNKLADLIERDHLLLATMEAMNGGKLFSNAYLMDLGGCIKTLRYCAGWADKIQGRTIPMDGNFFTYTRSEPVGVCGQIIPWNFPLLMFLWKIGPALSCGNTVVVKPAEQTPLTALHMGSLIKEAGFPPGVVNIVPGYGPTAGAAISSHMDVDKVAFTGSTEVGKLIKEAAGKSNLKRVSLELGGKSPCIVFADADLDNAVEFAHQGVFYHQGQCCIAASRLFVEESIYDEFVRRSVERAKKYVLGNPLTPGVSQGPQIDKEQYEKILDLIESGKKEGAKLECGGGPWGNKGYFIQPTVFSDVTDDMRIAKEEIFGPVQQIMKFKSLDDVIKRANNTFYGLSAGIFTNDIDKAITVSSALQSGTVWVNCYSVVSAQCPFGGFKMSGNGRELGEYGFHEYTEVKTVTIKISQKNS</sequence>
<protein>
    <recommendedName>
        <fullName evidence="12">Aldehyde dehydrogenase 1A1</fullName>
        <ecNumber evidence="4">1.2.1.19</ecNumber>
        <ecNumber evidence="1">1.2.1.28</ecNumber>
        <ecNumber evidence="10">1.2.1.3</ecNumber>
        <ecNumber evidence="10">1.2.1.36</ecNumber>
    </recommendedName>
    <alternativeName>
        <fullName evidence="1">3-deoxyglucosone dehydrogenase</fullName>
    </alternativeName>
    <alternativeName>
        <fullName>ALDH-E1</fullName>
    </alternativeName>
    <alternativeName>
        <fullName>ALHDII</fullName>
    </alternativeName>
    <alternativeName>
        <fullName>Aldehyde dehydrogenase family 1 member A1</fullName>
    </alternativeName>
    <alternativeName>
        <fullName evidence="11">Aldehyde dehydrogenase, cytosolic</fullName>
    </alternativeName>
    <alternativeName>
        <fullName evidence="11">Retinal dehydrogenase 1</fullName>
        <shortName evidence="11">RALDH 1</shortName>
        <shortName evidence="11">RalDH1</shortName>
    </alternativeName>
</protein>
<organism>
    <name type="scientific">Bos taurus</name>
    <name type="common">Bovine</name>
    <dbReference type="NCBI Taxonomy" id="9913"/>
    <lineage>
        <taxon>Eukaryota</taxon>
        <taxon>Metazoa</taxon>
        <taxon>Chordata</taxon>
        <taxon>Craniata</taxon>
        <taxon>Vertebrata</taxon>
        <taxon>Euteleostomi</taxon>
        <taxon>Mammalia</taxon>
        <taxon>Eutheria</taxon>
        <taxon>Laurasiatheria</taxon>
        <taxon>Artiodactyla</taxon>
        <taxon>Ruminantia</taxon>
        <taxon>Pecora</taxon>
        <taxon>Bovidae</taxon>
        <taxon>Bovinae</taxon>
        <taxon>Bos</taxon>
    </lineage>
</organism>
<name>AL1A1_BOVIN</name>
<gene>
    <name evidence="1" type="primary">ALDH1A1</name>
</gene>
<proteinExistence type="evidence at protein level"/>
<comment type="function">
    <text evidence="1 4 10 12">Cytosolic dehydrogenase that catalyzes the irreversible oxidation of a wide range of aldehydes to their corresponding carboxylic acid (PubMed:7786847). Functions downstream of retinol dehydrogenases and catalyzes the oxidation of retinaldehyde into retinoic acid, the second step in the oxidation of retinol/vitamin A into retinoic acid (PubMed:7786847). This pathway is crucial to control the levels of retinol and retinoic acid, two important molecules which excess can be teratogenic and cytotoxic (Probable). Also oxidizes aldehydes resulting from lipid peroxidation like (E)-4-hydroxynon-2-enal/HNE, malonaldehyde and hexanal that form protein adducts and are highly cytotoxic. By participating for instance to the clearance of (E)-4-hydroxynon-2-enal/HNE in the lens epithelium prevents the formation of HNE-protein adducts and lens opacification. Also functions downstream of fructosamine-3-kinase in the fructosamine degradation pathway by catalyzing the oxidation of 3-deoxyglucosone, the carbohydrate product of fructosamine 3-phosphate decomposition, which is itself a potent glycating agent that may react with lysine and arginine side-chains of proteins (By similarity). Also has an aminobutyraldehyde dehydrogenase activity and is probably part of an alternative pathway for the biosynthesis of GABA/4-aminobutanoate in midbrain, thereby playing a role in GABAergic synaptic transmission (By similarity).</text>
</comment>
<comment type="catalytic activity">
    <reaction evidence="10">
        <text>an aldehyde + NAD(+) + H2O = a carboxylate + NADH + 2 H(+)</text>
        <dbReference type="Rhea" id="RHEA:16185"/>
        <dbReference type="ChEBI" id="CHEBI:15377"/>
        <dbReference type="ChEBI" id="CHEBI:15378"/>
        <dbReference type="ChEBI" id="CHEBI:17478"/>
        <dbReference type="ChEBI" id="CHEBI:29067"/>
        <dbReference type="ChEBI" id="CHEBI:57540"/>
        <dbReference type="ChEBI" id="CHEBI:57945"/>
        <dbReference type="EC" id="1.2.1.3"/>
    </reaction>
    <physiologicalReaction direction="left-to-right" evidence="12">
        <dbReference type="Rhea" id="RHEA:16186"/>
    </physiologicalReaction>
</comment>
<comment type="catalytic activity">
    <reaction evidence="10">
        <text>all-trans-retinal + NAD(+) + H2O = all-trans-retinoate + NADH + 2 H(+)</text>
        <dbReference type="Rhea" id="RHEA:42080"/>
        <dbReference type="ChEBI" id="CHEBI:15377"/>
        <dbReference type="ChEBI" id="CHEBI:15378"/>
        <dbReference type="ChEBI" id="CHEBI:17898"/>
        <dbReference type="ChEBI" id="CHEBI:35291"/>
        <dbReference type="ChEBI" id="CHEBI:57540"/>
        <dbReference type="ChEBI" id="CHEBI:57945"/>
        <dbReference type="EC" id="1.2.1.36"/>
    </reaction>
    <physiologicalReaction direction="left-to-right" evidence="12">
        <dbReference type="Rhea" id="RHEA:42081"/>
    </physiologicalReaction>
</comment>
<comment type="catalytic activity">
    <reaction evidence="5">
        <text>9-cis-retinal + NAD(+) + H2O = 9-cis-retinoate + NADH + 2 H(+)</text>
        <dbReference type="Rhea" id="RHEA:42084"/>
        <dbReference type="ChEBI" id="CHEBI:15377"/>
        <dbReference type="ChEBI" id="CHEBI:15378"/>
        <dbReference type="ChEBI" id="CHEBI:57540"/>
        <dbReference type="ChEBI" id="CHEBI:57945"/>
        <dbReference type="ChEBI" id="CHEBI:78273"/>
        <dbReference type="ChEBI" id="CHEBI:78630"/>
    </reaction>
    <physiologicalReaction direction="left-to-right" evidence="5">
        <dbReference type="Rhea" id="RHEA:42085"/>
    </physiologicalReaction>
</comment>
<comment type="catalytic activity">
    <reaction evidence="5">
        <text>11-cis-retinal + NAD(+) + H2O = 11-cis-retinoate + NADH + 2 H(+)</text>
        <dbReference type="Rhea" id="RHEA:47132"/>
        <dbReference type="ChEBI" id="CHEBI:15377"/>
        <dbReference type="ChEBI" id="CHEBI:15378"/>
        <dbReference type="ChEBI" id="CHEBI:16066"/>
        <dbReference type="ChEBI" id="CHEBI:57540"/>
        <dbReference type="ChEBI" id="CHEBI:57945"/>
        <dbReference type="ChEBI" id="CHEBI:87435"/>
    </reaction>
    <physiologicalReaction direction="left-to-right" evidence="5">
        <dbReference type="Rhea" id="RHEA:47133"/>
    </physiologicalReaction>
</comment>
<comment type="catalytic activity">
    <reaction evidence="7">
        <text>13-cis-retinal + NAD(+) + H2O = 13-cis-retinoate + NADH + 2 H(+)</text>
        <dbReference type="Rhea" id="RHEA:67332"/>
        <dbReference type="ChEBI" id="CHEBI:15377"/>
        <dbReference type="ChEBI" id="CHEBI:15378"/>
        <dbReference type="ChEBI" id="CHEBI:45487"/>
        <dbReference type="ChEBI" id="CHEBI:57540"/>
        <dbReference type="ChEBI" id="CHEBI:57945"/>
        <dbReference type="ChEBI" id="CHEBI:169952"/>
    </reaction>
    <physiologicalReaction direction="left-to-right" evidence="7">
        <dbReference type="Rhea" id="RHEA:67333"/>
    </physiologicalReaction>
</comment>
<comment type="catalytic activity">
    <reaction evidence="1">
        <text>3-deoxyglucosone + NAD(+) + H2O = 2-dehydro-3-deoxy-D-gluconate + NADH + 2 H(+)</text>
        <dbReference type="Rhea" id="RHEA:67244"/>
        <dbReference type="ChEBI" id="CHEBI:15377"/>
        <dbReference type="ChEBI" id="CHEBI:15378"/>
        <dbReference type="ChEBI" id="CHEBI:57540"/>
        <dbReference type="ChEBI" id="CHEBI:57945"/>
        <dbReference type="ChEBI" id="CHEBI:57990"/>
        <dbReference type="ChEBI" id="CHEBI:60777"/>
    </reaction>
    <physiologicalReaction direction="left-to-right" evidence="1">
        <dbReference type="Rhea" id="RHEA:67245"/>
    </physiologicalReaction>
</comment>
<comment type="catalytic activity">
    <reaction evidence="1">
        <text>(E)-4-hydroxynon-2-enal + NAD(+) + H2O = (E)-4-hydroxynon-2-enoate + NADH + 2 H(+)</text>
        <dbReference type="Rhea" id="RHEA:67248"/>
        <dbReference type="ChEBI" id="CHEBI:15377"/>
        <dbReference type="ChEBI" id="CHEBI:15378"/>
        <dbReference type="ChEBI" id="CHEBI:57540"/>
        <dbReference type="ChEBI" id="CHEBI:57945"/>
        <dbReference type="ChEBI" id="CHEBI:58968"/>
        <dbReference type="ChEBI" id="CHEBI:142920"/>
    </reaction>
    <physiologicalReaction direction="left-to-right" evidence="1">
        <dbReference type="Rhea" id="RHEA:67249"/>
    </physiologicalReaction>
</comment>
<comment type="catalytic activity">
    <reaction evidence="1">
        <text>malonaldehyde + NAD(+) + H2O = 3-oxopropanoate + NADH + 2 H(+)</text>
        <dbReference type="Rhea" id="RHEA:67252"/>
        <dbReference type="ChEBI" id="CHEBI:15377"/>
        <dbReference type="ChEBI" id="CHEBI:15378"/>
        <dbReference type="ChEBI" id="CHEBI:33190"/>
        <dbReference type="ChEBI" id="CHEBI:57540"/>
        <dbReference type="ChEBI" id="CHEBI:57945"/>
        <dbReference type="ChEBI" id="CHEBI:566274"/>
    </reaction>
    <physiologicalReaction direction="left-to-right" evidence="1">
        <dbReference type="Rhea" id="RHEA:67253"/>
    </physiologicalReaction>
</comment>
<comment type="catalytic activity">
    <reaction evidence="1">
        <text>hexanal + NAD(+) + H2O = hexanoate + NADH + 2 H(+)</text>
        <dbReference type="Rhea" id="RHEA:67276"/>
        <dbReference type="ChEBI" id="CHEBI:15377"/>
        <dbReference type="ChEBI" id="CHEBI:15378"/>
        <dbReference type="ChEBI" id="CHEBI:17120"/>
        <dbReference type="ChEBI" id="CHEBI:57540"/>
        <dbReference type="ChEBI" id="CHEBI:57945"/>
        <dbReference type="ChEBI" id="CHEBI:88528"/>
    </reaction>
    <physiologicalReaction direction="left-to-right" evidence="1">
        <dbReference type="Rhea" id="RHEA:67277"/>
    </physiologicalReaction>
</comment>
<comment type="catalytic activity">
    <reaction evidence="10">
        <text>propanal + NAD(+) + H2O = propanoate + NADH + 2 H(+)</text>
        <dbReference type="Rhea" id="RHEA:67256"/>
        <dbReference type="ChEBI" id="CHEBI:15377"/>
        <dbReference type="ChEBI" id="CHEBI:15378"/>
        <dbReference type="ChEBI" id="CHEBI:17153"/>
        <dbReference type="ChEBI" id="CHEBI:17272"/>
        <dbReference type="ChEBI" id="CHEBI:57540"/>
        <dbReference type="ChEBI" id="CHEBI:57945"/>
    </reaction>
    <physiologicalReaction direction="left-to-right" evidence="12">
        <dbReference type="Rhea" id="RHEA:67257"/>
    </physiologicalReaction>
</comment>
<comment type="catalytic activity">
    <reaction evidence="1">
        <text>acetaldehyde + NAD(+) + H2O = acetate + NADH + 2 H(+)</text>
        <dbReference type="Rhea" id="RHEA:25294"/>
        <dbReference type="ChEBI" id="CHEBI:15343"/>
        <dbReference type="ChEBI" id="CHEBI:15377"/>
        <dbReference type="ChEBI" id="CHEBI:15378"/>
        <dbReference type="ChEBI" id="CHEBI:30089"/>
        <dbReference type="ChEBI" id="CHEBI:57540"/>
        <dbReference type="ChEBI" id="CHEBI:57945"/>
        <dbReference type="EC" id="1.2.1.3"/>
    </reaction>
    <physiologicalReaction direction="left-to-right" evidence="1">
        <dbReference type="Rhea" id="RHEA:25295"/>
    </physiologicalReaction>
</comment>
<comment type="catalytic activity">
    <reaction evidence="1">
        <text>benzaldehyde + NAD(+) + H2O = benzoate + NADH + 2 H(+)</text>
        <dbReference type="Rhea" id="RHEA:11840"/>
        <dbReference type="ChEBI" id="CHEBI:15377"/>
        <dbReference type="ChEBI" id="CHEBI:15378"/>
        <dbReference type="ChEBI" id="CHEBI:16150"/>
        <dbReference type="ChEBI" id="CHEBI:17169"/>
        <dbReference type="ChEBI" id="CHEBI:57540"/>
        <dbReference type="ChEBI" id="CHEBI:57945"/>
        <dbReference type="EC" id="1.2.1.28"/>
    </reaction>
    <physiologicalReaction direction="left-to-right" evidence="1">
        <dbReference type="Rhea" id="RHEA:11841"/>
    </physiologicalReaction>
</comment>
<comment type="catalytic activity">
    <reaction evidence="4">
        <text>4-aminobutanal + NAD(+) + H2O = 4-aminobutanoate + NADH + 2 H(+)</text>
        <dbReference type="Rhea" id="RHEA:19105"/>
        <dbReference type="ChEBI" id="CHEBI:15377"/>
        <dbReference type="ChEBI" id="CHEBI:15378"/>
        <dbReference type="ChEBI" id="CHEBI:57540"/>
        <dbReference type="ChEBI" id="CHEBI:57945"/>
        <dbReference type="ChEBI" id="CHEBI:58264"/>
        <dbReference type="ChEBI" id="CHEBI:59888"/>
        <dbReference type="EC" id="1.2.1.19"/>
    </reaction>
    <physiologicalReaction direction="left-to-right" evidence="4">
        <dbReference type="Rhea" id="RHEA:19106"/>
    </physiologicalReaction>
</comment>
<comment type="biophysicochemical properties">
    <kinetics>
        <KM evidence="10">9 uM for all-trans retinal</KM>
        <KM evidence="10">600 uM for propanal</KM>
        <Vmax evidence="10">106.0 pmol/min/mg enzyme with all-trans retinal</Vmax>
        <Vmax evidence="10">4650.0 pmol/min/mg enzyme with propanal</Vmax>
        <text evidence="10">Has a much higher catalytic efficiency toward all-trans retinal.</text>
    </kinetics>
</comment>
<comment type="pathway">
    <text evidence="10">Cofactor metabolism; retinol metabolism.</text>
</comment>
<comment type="subunit">
    <text evidence="1 6">Homotetramer (By similarity). Interacts with PRMT3; the interaction is direct, inhibits ALDH1A1 aldehyde dehydrogenase activity and is independent of the methyltransferase activity of PRMT3 (By similarity).</text>
</comment>
<comment type="subcellular location">
    <subcellularLocation>
        <location evidence="10">Cytoplasm</location>
        <location evidence="10">Cytosol</location>
    </subcellularLocation>
    <subcellularLocation>
        <location evidence="4">Cell projection</location>
        <location evidence="4">Axon</location>
    </subcellularLocation>
</comment>
<comment type="tissue specificity">
    <text evidence="10">Expressed in muscle, liver, small intestine, kidney, brain, lung, heart but not detected in erythrocytes (at protein level).</text>
</comment>
<comment type="PTM">
    <text evidence="2">The N-terminus is blocked most probably by acetylation.</text>
</comment>
<comment type="similarity">
    <text evidence="11">Belongs to the aldehyde dehydrogenase family.</text>
</comment>
<feature type="initiator methionine" description="Removed" evidence="2">
    <location>
        <position position="1"/>
    </location>
</feature>
<feature type="chain" id="PRO_0000056413" description="Aldehyde dehydrogenase 1A1">
    <location>
        <begin position="2"/>
        <end position="501"/>
    </location>
</feature>
<feature type="region of interest" description="Mediates interaction with PRMT3" evidence="1">
    <location>
        <begin position="336"/>
        <end position="501"/>
    </location>
</feature>
<feature type="active site" description="Proton acceptor" evidence="8 9">
    <location>
        <position position="269"/>
    </location>
</feature>
<feature type="active site" description="Nucleophile" evidence="8 9">
    <location>
        <position position="303"/>
    </location>
</feature>
<feature type="binding site" evidence="1">
    <location>
        <begin position="167"/>
        <end position="170"/>
    </location>
    <ligand>
        <name>NAD(+)</name>
        <dbReference type="ChEBI" id="CHEBI:57540"/>
    </ligand>
</feature>
<feature type="binding site" evidence="1">
    <location>
        <begin position="193"/>
        <end position="196"/>
    </location>
    <ligand>
        <name>NAD(+)</name>
        <dbReference type="ChEBI" id="CHEBI:57540"/>
    </ligand>
</feature>
<feature type="binding site" evidence="1">
    <location>
        <begin position="226"/>
        <end position="227"/>
    </location>
    <ligand>
        <name>NAD(+)</name>
        <dbReference type="ChEBI" id="CHEBI:57540"/>
    </ligand>
</feature>
<feature type="binding site" evidence="1">
    <location>
        <begin position="246"/>
        <end position="247"/>
    </location>
    <ligand>
        <name>NAD(+)</name>
        <dbReference type="ChEBI" id="CHEBI:57540"/>
    </ligand>
</feature>
<feature type="binding site" evidence="1">
    <location>
        <begin position="269"/>
        <end position="271"/>
    </location>
    <ligand>
        <name>NAD(+)</name>
        <dbReference type="ChEBI" id="CHEBI:57540"/>
    </ligand>
</feature>
<feature type="binding site" evidence="1">
    <location>
        <begin position="349"/>
        <end position="353"/>
    </location>
    <ligand>
        <name>NAD(+)</name>
        <dbReference type="ChEBI" id="CHEBI:57540"/>
    </ligand>
</feature>
<feature type="binding site" evidence="1">
    <location>
        <begin position="400"/>
        <end position="402"/>
    </location>
    <ligand>
        <name>NAD(+)</name>
        <dbReference type="ChEBI" id="CHEBI:57540"/>
    </ligand>
</feature>
<feature type="site" description="Transition state stabilizer" evidence="3">
    <location>
        <position position="170"/>
    </location>
</feature>
<feature type="modified residue" description="N-acetylserine" evidence="2">
    <location>
        <position position="2"/>
    </location>
</feature>
<feature type="modified residue" description="N6-acetyllysine" evidence="1">
    <location>
        <position position="91"/>
    </location>
</feature>
<feature type="modified residue" description="N6-acetyllysine" evidence="1">
    <location>
        <position position="128"/>
    </location>
</feature>
<feature type="modified residue" description="N6-acetyllysine" evidence="1">
    <location>
        <position position="252"/>
    </location>
</feature>
<feature type="modified residue" description="Phosphothreonine" evidence="1">
    <location>
        <position position="337"/>
    </location>
</feature>
<feature type="modified residue" description="N6-acetyllysine" evidence="1">
    <location>
        <position position="353"/>
    </location>
</feature>
<feature type="modified residue" description="N6-acetyllysine" evidence="1">
    <location>
        <position position="367"/>
    </location>
</feature>
<feature type="modified residue" description="N6-acetyllysine" evidence="1">
    <location>
        <position position="410"/>
    </location>
</feature>
<feature type="modified residue" description="Phosphoserine" evidence="1">
    <location>
        <position position="413"/>
    </location>
</feature>
<feature type="modified residue" description="N6-acetyllysine" evidence="1">
    <location>
        <position position="419"/>
    </location>
</feature>
<feature type="modified residue" description="N6-acetyllysine" evidence="1">
    <location>
        <position position="495"/>
    </location>
</feature>
<feature type="sequence conflict" description="In Ref. 1; AAA74234." evidence="11" ref="1">
    <original>A</original>
    <variation>V</variation>
    <location>
        <position position="67"/>
    </location>
</feature>
<accession>P48644</accession>
<accession>A7E3P6</accession>
<accession>Q3MHL5</accession>